<name>Y1662_ALIFM</name>
<keyword id="KW-1003">Cell membrane</keyword>
<keyword id="KW-0472">Membrane</keyword>
<keyword id="KW-0812">Transmembrane</keyword>
<keyword id="KW-1133">Transmembrane helix</keyword>
<proteinExistence type="inferred from homology"/>
<accession>B5FEZ3</accession>
<gene>
    <name type="ordered locus">VFMJ11_1662</name>
</gene>
<evidence type="ECO:0000255" key="1">
    <source>
        <dbReference type="HAMAP-Rule" id="MF_01572"/>
    </source>
</evidence>
<feature type="chain" id="PRO_1000200765" description="UPF0397 protein VFMJ11_1662">
    <location>
        <begin position="1"/>
        <end position="183"/>
    </location>
</feature>
<feature type="transmembrane region" description="Helical" evidence="1">
    <location>
        <begin position="8"/>
        <end position="28"/>
    </location>
</feature>
<feature type="transmembrane region" description="Helical" evidence="1">
    <location>
        <begin position="41"/>
        <end position="61"/>
    </location>
</feature>
<feature type="transmembrane region" description="Helical" evidence="1">
    <location>
        <begin position="75"/>
        <end position="95"/>
    </location>
</feature>
<feature type="transmembrane region" description="Helical" evidence="1">
    <location>
        <begin position="110"/>
        <end position="130"/>
    </location>
</feature>
<feature type="transmembrane region" description="Helical" evidence="1">
    <location>
        <begin position="147"/>
        <end position="167"/>
    </location>
</feature>
<dbReference type="EMBL" id="CP001139">
    <property type="protein sequence ID" value="ACH65683.1"/>
    <property type="molecule type" value="Genomic_DNA"/>
</dbReference>
<dbReference type="RefSeq" id="WP_005419808.1">
    <property type="nucleotide sequence ID" value="NC_011184.1"/>
</dbReference>
<dbReference type="SMR" id="B5FEZ3"/>
<dbReference type="GeneID" id="54164240"/>
<dbReference type="KEGG" id="vfm:VFMJ11_1662"/>
<dbReference type="HOGENOM" id="CLU_120023_0_0_6"/>
<dbReference type="Proteomes" id="UP000001857">
    <property type="component" value="Chromosome I"/>
</dbReference>
<dbReference type="GO" id="GO:0005886">
    <property type="term" value="C:plasma membrane"/>
    <property type="evidence" value="ECO:0007669"/>
    <property type="project" value="UniProtKB-SubCell"/>
</dbReference>
<dbReference type="Gene3D" id="1.10.1760.20">
    <property type="match status" value="1"/>
</dbReference>
<dbReference type="HAMAP" id="MF_01572">
    <property type="entry name" value="UPF0397"/>
    <property type="match status" value="1"/>
</dbReference>
<dbReference type="InterPro" id="IPR009825">
    <property type="entry name" value="ECF_substrate-spec-like"/>
</dbReference>
<dbReference type="InterPro" id="IPR022914">
    <property type="entry name" value="UPF0397"/>
</dbReference>
<dbReference type="NCBIfam" id="NF010182">
    <property type="entry name" value="PRK13661.1"/>
    <property type="match status" value="1"/>
</dbReference>
<dbReference type="PANTHER" id="PTHR37815">
    <property type="entry name" value="UPF0397 PROTEIN BC_2624-RELATED"/>
    <property type="match status" value="1"/>
</dbReference>
<dbReference type="PANTHER" id="PTHR37815:SF3">
    <property type="entry name" value="UPF0397 PROTEIN SPR0429"/>
    <property type="match status" value="1"/>
</dbReference>
<dbReference type="Pfam" id="PF07155">
    <property type="entry name" value="ECF-ribofla_trS"/>
    <property type="match status" value="1"/>
</dbReference>
<reference key="1">
    <citation type="submission" date="2008-08" db="EMBL/GenBank/DDBJ databases">
        <title>Complete sequence of Vibrio fischeri strain MJ11.</title>
        <authorList>
            <person name="Mandel M.J."/>
            <person name="Stabb E.V."/>
            <person name="Ruby E.G."/>
            <person name="Ferriera S."/>
            <person name="Johnson J."/>
            <person name="Kravitz S."/>
            <person name="Beeson K."/>
            <person name="Sutton G."/>
            <person name="Rogers Y.-H."/>
            <person name="Friedman R."/>
            <person name="Frazier M."/>
            <person name="Venter J.C."/>
        </authorList>
    </citation>
    <scope>NUCLEOTIDE SEQUENCE [LARGE SCALE GENOMIC DNA]</scope>
    <source>
        <strain>MJ11</strain>
    </source>
</reference>
<protein>
    <recommendedName>
        <fullName evidence="1">UPF0397 protein VFMJ11_1662</fullName>
    </recommendedName>
</protein>
<organism>
    <name type="scientific">Aliivibrio fischeri (strain MJ11)</name>
    <name type="common">Vibrio fischeri</name>
    <dbReference type="NCBI Taxonomy" id="388396"/>
    <lineage>
        <taxon>Bacteria</taxon>
        <taxon>Pseudomonadati</taxon>
        <taxon>Pseudomonadota</taxon>
        <taxon>Gammaproteobacteria</taxon>
        <taxon>Vibrionales</taxon>
        <taxon>Vibrionaceae</taxon>
        <taxon>Aliivibrio</taxon>
    </lineage>
</organism>
<sequence length="183" mass="19754">MNLSAKTVVVIAIGAALYGIGGLPMFGIPVFANTTLKPAMAVLALFSVLYGPIVGFLVGFIGHWVTDLFAGWGVWLTWVLGSGIVGMIIGLFPIITKNRIESGLFDKKDFLIFVVLAFFGNVFGYGTSAFLDTILYAEPFTKVFMQLCIIAAGNTFLIAIVGYFILNNLAKRKKQSTNLTEAP</sequence>
<comment type="subcellular location">
    <subcellularLocation>
        <location evidence="1">Cell membrane</location>
        <topology evidence="1">Multi-pass membrane protein</topology>
    </subcellularLocation>
</comment>
<comment type="similarity">
    <text evidence="1">Belongs to the UPF0397 family.</text>
</comment>